<gene>
    <name type="primary">leuD1</name>
    <name type="synonym">leuD-1</name>
    <name type="ordered locus">PYRAB13510</name>
    <name type="ORF">PAB0892</name>
</gene>
<feature type="chain" id="PRO_0000141944" description="3-isopropylmalate dehydratase small subunit 1">
    <location>
        <begin position="1"/>
        <end position="164"/>
    </location>
</feature>
<name>LEUD1_PYRAB</name>
<keyword id="KW-0028">Amino-acid biosynthesis</keyword>
<keyword id="KW-0100">Branched-chain amino acid biosynthesis</keyword>
<keyword id="KW-0432">Leucine biosynthesis</keyword>
<keyword id="KW-0456">Lyase</keyword>
<proteinExistence type="inferred from homology"/>
<comment type="function">
    <text evidence="1">Catalyzes the isomerization between 2-isopropylmalate and 3-isopropylmalate, via the formation of 2-isopropylmaleate.</text>
</comment>
<comment type="catalytic activity">
    <reaction>
        <text>(2R,3S)-3-isopropylmalate = (2S)-2-isopropylmalate</text>
        <dbReference type="Rhea" id="RHEA:32287"/>
        <dbReference type="ChEBI" id="CHEBI:1178"/>
        <dbReference type="ChEBI" id="CHEBI:35121"/>
        <dbReference type="EC" id="4.2.1.33"/>
    </reaction>
</comment>
<comment type="pathway">
    <text>Amino-acid biosynthesis; L-leucine biosynthesis; L-leucine from 3-methyl-2-oxobutanoate: step 2/4.</text>
</comment>
<comment type="subunit">
    <text evidence="1">Heterodimer of LeuC and LeuD.</text>
</comment>
<comment type="similarity">
    <text evidence="2">Belongs to the LeuD family. LeuD type 2 subfamily.</text>
</comment>
<sequence>MRVRGRAWKYGDNIDTDVIIPARYLNTSDPKELAKHVLEDLDPEFRSKMKPGDIIVAGENFGCGSSREHAPLAIKAAGVSCVIAKSFARIFYRNAINIGLPILEAPQAVDRIETGDELEVDFSSGEIRNLTKGEVYRANPFPDFIMEIIKAGGLVEWAKRRLKG</sequence>
<protein>
    <recommendedName>
        <fullName>3-isopropylmalate dehydratase small subunit 1</fullName>
        <ecNumber>4.2.1.33</ecNumber>
    </recommendedName>
    <alternativeName>
        <fullName>Alpha-IPM isomerase 1</fullName>
        <shortName>IPMI 1</shortName>
    </alternativeName>
    <alternativeName>
        <fullName>Isopropylmalate isomerase 1</fullName>
    </alternativeName>
</protein>
<accession>Q9UZ06</accession>
<accession>G8ZHF7</accession>
<evidence type="ECO:0000250" key="1"/>
<evidence type="ECO:0000305" key="2"/>
<organism>
    <name type="scientific">Pyrococcus abyssi (strain GE5 / Orsay)</name>
    <dbReference type="NCBI Taxonomy" id="272844"/>
    <lineage>
        <taxon>Archaea</taxon>
        <taxon>Methanobacteriati</taxon>
        <taxon>Methanobacteriota</taxon>
        <taxon>Thermococci</taxon>
        <taxon>Thermococcales</taxon>
        <taxon>Thermococcaceae</taxon>
        <taxon>Pyrococcus</taxon>
    </lineage>
</organism>
<reference key="1">
    <citation type="journal article" date="2003" name="Mol. Microbiol.">
        <title>An integrated analysis of the genome of the hyperthermophilic archaeon Pyrococcus abyssi.</title>
        <authorList>
            <person name="Cohen G.N."/>
            <person name="Barbe V."/>
            <person name="Flament D."/>
            <person name="Galperin M."/>
            <person name="Heilig R."/>
            <person name="Lecompte O."/>
            <person name="Poch O."/>
            <person name="Prieur D."/>
            <person name="Querellou J."/>
            <person name="Ripp R."/>
            <person name="Thierry J.-C."/>
            <person name="Van der Oost J."/>
            <person name="Weissenbach J."/>
            <person name="Zivanovic Y."/>
            <person name="Forterre P."/>
        </authorList>
    </citation>
    <scope>NUCLEOTIDE SEQUENCE [LARGE SCALE GENOMIC DNA]</scope>
    <source>
        <strain>GE5 / Orsay</strain>
    </source>
</reference>
<reference key="2">
    <citation type="journal article" date="2012" name="Curr. Microbiol.">
        <title>Re-annotation of two hyperthermophilic archaea Pyrococcus abyssi GE5 and Pyrococcus furiosus DSM 3638.</title>
        <authorList>
            <person name="Gao J."/>
            <person name="Wang J."/>
        </authorList>
    </citation>
    <scope>GENOME REANNOTATION</scope>
    <source>
        <strain>GE5 / Orsay</strain>
    </source>
</reference>
<dbReference type="EC" id="4.2.1.33"/>
<dbReference type="EMBL" id="AJ248287">
    <property type="protein sequence ID" value="CAB50256.1"/>
    <property type="molecule type" value="Genomic_DNA"/>
</dbReference>
<dbReference type="EMBL" id="HE613800">
    <property type="protein sequence ID" value="CCE70794.1"/>
    <property type="molecule type" value="Genomic_DNA"/>
</dbReference>
<dbReference type="PIR" id="C75045">
    <property type="entry name" value="C75045"/>
</dbReference>
<dbReference type="RefSeq" id="WP_010868466.1">
    <property type="nucleotide sequence ID" value="NC_000868.1"/>
</dbReference>
<dbReference type="SMR" id="Q9UZ06"/>
<dbReference type="STRING" id="272844.PAB0892"/>
<dbReference type="KEGG" id="pab:PAB0892"/>
<dbReference type="PATRIC" id="fig|272844.11.peg.1437"/>
<dbReference type="eggNOG" id="arCOG02230">
    <property type="taxonomic scope" value="Archaea"/>
</dbReference>
<dbReference type="HOGENOM" id="CLU_081378_1_1_2"/>
<dbReference type="OrthoDB" id="6505at2157"/>
<dbReference type="PhylomeDB" id="Q9UZ06"/>
<dbReference type="UniPathway" id="UPA00048">
    <property type="reaction ID" value="UER00071"/>
</dbReference>
<dbReference type="Proteomes" id="UP000000810">
    <property type="component" value="Chromosome"/>
</dbReference>
<dbReference type="Proteomes" id="UP000009139">
    <property type="component" value="Chromosome"/>
</dbReference>
<dbReference type="GO" id="GO:0003861">
    <property type="term" value="F:3-isopropylmalate dehydratase activity"/>
    <property type="evidence" value="ECO:0007669"/>
    <property type="project" value="UniProtKB-UniRule"/>
</dbReference>
<dbReference type="GO" id="GO:0009098">
    <property type="term" value="P:L-leucine biosynthetic process"/>
    <property type="evidence" value="ECO:0007669"/>
    <property type="project" value="UniProtKB-UniRule"/>
</dbReference>
<dbReference type="CDD" id="cd01577">
    <property type="entry name" value="IPMI_Swivel"/>
    <property type="match status" value="1"/>
</dbReference>
<dbReference type="FunFam" id="3.20.19.10:FF:000007">
    <property type="entry name" value="Isopropylmalate/citramalate isomerase small subunit"/>
    <property type="match status" value="1"/>
</dbReference>
<dbReference type="Gene3D" id="3.20.19.10">
    <property type="entry name" value="Aconitase, domain 4"/>
    <property type="match status" value="1"/>
</dbReference>
<dbReference type="HAMAP" id="MF_01032">
    <property type="entry name" value="LeuD_type2"/>
    <property type="match status" value="1"/>
</dbReference>
<dbReference type="InterPro" id="IPR015928">
    <property type="entry name" value="Aconitase/3IPM_dehydase_swvl"/>
</dbReference>
<dbReference type="InterPro" id="IPR000573">
    <property type="entry name" value="AconitaseA/IPMdHydase_ssu_swvl"/>
</dbReference>
<dbReference type="InterPro" id="IPR033940">
    <property type="entry name" value="IPMI_Swivel"/>
</dbReference>
<dbReference type="InterPro" id="IPR050075">
    <property type="entry name" value="LeuD"/>
</dbReference>
<dbReference type="InterPro" id="IPR011824">
    <property type="entry name" value="LeuD/DmdB_bac"/>
</dbReference>
<dbReference type="InterPro" id="IPR011827">
    <property type="entry name" value="LeuD_type2/HacB/DmdB"/>
</dbReference>
<dbReference type="NCBIfam" id="TIGR02084">
    <property type="entry name" value="leud"/>
    <property type="match status" value="1"/>
</dbReference>
<dbReference type="NCBIfam" id="TIGR02087">
    <property type="entry name" value="LEUD_arch"/>
    <property type="match status" value="1"/>
</dbReference>
<dbReference type="PANTHER" id="PTHR43345:SF2">
    <property type="entry name" value="3-ISOPROPYLMALATE DEHYDRATASE SMALL SUBUNIT 1"/>
    <property type="match status" value="1"/>
</dbReference>
<dbReference type="PANTHER" id="PTHR43345">
    <property type="entry name" value="3-ISOPROPYLMALATE DEHYDRATASE SMALL SUBUNIT 2-RELATED-RELATED"/>
    <property type="match status" value="1"/>
</dbReference>
<dbReference type="Pfam" id="PF00694">
    <property type="entry name" value="Aconitase_C"/>
    <property type="match status" value="1"/>
</dbReference>
<dbReference type="SUPFAM" id="SSF52016">
    <property type="entry name" value="LeuD/IlvD-like"/>
    <property type="match status" value="1"/>
</dbReference>